<protein>
    <recommendedName>
        <fullName evidence="1">NADH-quinone oxidoreductase subunit C/D</fullName>
        <ecNumber evidence="1">7.1.1.-</ecNumber>
    </recommendedName>
    <alternativeName>
        <fullName evidence="1">NADH dehydrogenase I subunit C/D</fullName>
    </alternativeName>
    <alternativeName>
        <fullName evidence="1">NDH-1 subunit C/D</fullName>
    </alternativeName>
</protein>
<feature type="chain" id="PRO_1000166681" description="NADH-quinone oxidoreductase subunit C/D">
    <location>
        <begin position="1"/>
        <end position="600"/>
    </location>
</feature>
<feature type="region of interest" description="NADH dehydrogenase I subunit C" evidence="1">
    <location>
        <begin position="1"/>
        <end position="190"/>
    </location>
</feature>
<feature type="region of interest" description="NADH dehydrogenase I subunit D" evidence="1">
    <location>
        <begin position="214"/>
        <end position="600"/>
    </location>
</feature>
<organism>
    <name type="scientific">Escherichia coli O81 (strain ED1a)</name>
    <dbReference type="NCBI Taxonomy" id="585397"/>
    <lineage>
        <taxon>Bacteria</taxon>
        <taxon>Pseudomonadati</taxon>
        <taxon>Pseudomonadota</taxon>
        <taxon>Gammaproteobacteria</taxon>
        <taxon>Enterobacterales</taxon>
        <taxon>Enterobacteriaceae</taxon>
        <taxon>Escherichia</taxon>
    </lineage>
</organism>
<dbReference type="EC" id="7.1.1.-" evidence="1"/>
<dbReference type="EMBL" id="CU928162">
    <property type="protein sequence ID" value="CAR08781.1"/>
    <property type="molecule type" value="Genomic_DNA"/>
</dbReference>
<dbReference type="RefSeq" id="WP_000247881.1">
    <property type="nucleotide sequence ID" value="NC_011745.1"/>
</dbReference>
<dbReference type="SMR" id="B7MXG5"/>
<dbReference type="KEGG" id="ecq:ECED1_2750"/>
<dbReference type="HOGENOM" id="CLU_015134_3_2_6"/>
<dbReference type="Proteomes" id="UP000000748">
    <property type="component" value="Chromosome"/>
</dbReference>
<dbReference type="GO" id="GO:0030964">
    <property type="term" value="C:NADH dehydrogenase complex"/>
    <property type="evidence" value="ECO:0007669"/>
    <property type="project" value="InterPro"/>
</dbReference>
<dbReference type="GO" id="GO:0005886">
    <property type="term" value="C:plasma membrane"/>
    <property type="evidence" value="ECO:0007669"/>
    <property type="project" value="UniProtKB-SubCell"/>
</dbReference>
<dbReference type="GO" id="GO:0051287">
    <property type="term" value="F:NAD binding"/>
    <property type="evidence" value="ECO:0007669"/>
    <property type="project" value="InterPro"/>
</dbReference>
<dbReference type="GO" id="GO:0008137">
    <property type="term" value="F:NADH dehydrogenase (ubiquinone) activity"/>
    <property type="evidence" value="ECO:0007669"/>
    <property type="project" value="InterPro"/>
</dbReference>
<dbReference type="GO" id="GO:0050136">
    <property type="term" value="F:NADH:ubiquinone reductase (non-electrogenic) activity"/>
    <property type="evidence" value="ECO:0007669"/>
    <property type="project" value="UniProtKB-UniRule"/>
</dbReference>
<dbReference type="GO" id="GO:0048038">
    <property type="term" value="F:quinone binding"/>
    <property type="evidence" value="ECO:0007669"/>
    <property type="project" value="UniProtKB-KW"/>
</dbReference>
<dbReference type="FunFam" id="1.10.645.10:FF:000001">
    <property type="entry name" value="NADH-quinone oxidoreductase subunit C/D"/>
    <property type="match status" value="1"/>
</dbReference>
<dbReference type="FunFam" id="3.30.460.80:FF:000001">
    <property type="entry name" value="NADH-quinone oxidoreductase subunit C/D"/>
    <property type="match status" value="1"/>
</dbReference>
<dbReference type="Gene3D" id="1.10.645.10">
    <property type="entry name" value="Cytochrome-c3 Hydrogenase, chain B"/>
    <property type="match status" value="1"/>
</dbReference>
<dbReference type="Gene3D" id="3.30.460.80">
    <property type="entry name" value="NADH:ubiquinone oxidoreductase, 30kDa subunit"/>
    <property type="match status" value="1"/>
</dbReference>
<dbReference type="HAMAP" id="MF_01357">
    <property type="entry name" value="NDH1_NuoC"/>
    <property type="match status" value="1"/>
</dbReference>
<dbReference type="HAMAP" id="MF_01359">
    <property type="entry name" value="NDH1_NuoCD_1"/>
    <property type="match status" value="1"/>
</dbReference>
<dbReference type="HAMAP" id="MF_01358">
    <property type="entry name" value="NDH1_NuoD"/>
    <property type="match status" value="1"/>
</dbReference>
<dbReference type="InterPro" id="IPR010218">
    <property type="entry name" value="NADH_DH_suC"/>
</dbReference>
<dbReference type="InterPro" id="IPR023062">
    <property type="entry name" value="NADH_DH_suCD"/>
</dbReference>
<dbReference type="InterPro" id="IPR001135">
    <property type="entry name" value="NADH_Q_OxRdtase_suD"/>
</dbReference>
<dbReference type="InterPro" id="IPR037232">
    <property type="entry name" value="NADH_quin_OxRdtase_su_C/D-like"/>
</dbReference>
<dbReference type="InterPro" id="IPR001268">
    <property type="entry name" value="NADH_UbQ_OxRdtase_30kDa_su"/>
</dbReference>
<dbReference type="InterPro" id="IPR014029">
    <property type="entry name" value="NADH_UbQ_OxRdtase_49kDa_CS"/>
</dbReference>
<dbReference type="InterPro" id="IPR020396">
    <property type="entry name" value="NADH_UbQ_OxRdtase_CS"/>
</dbReference>
<dbReference type="InterPro" id="IPR022885">
    <property type="entry name" value="NDH1_su_D/H"/>
</dbReference>
<dbReference type="InterPro" id="IPR029014">
    <property type="entry name" value="NiFe-Hase_large"/>
</dbReference>
<dbReference type="NCBIfam" id="TIGR01961">
    <property type="entry name" value="NuoC_fam"/>
    <property type="match status" value="1"/>
</dbReference>
<dbReference type="NCBIfam" id="TIGR01962">
    <property type="entry name" value="NuoD"/>
    <property type="match status" value="1"/>
</dbReference>
<dbReference type="NCBIfam" id="NF004739">
    <property type="entry name" value="PRK06075.1"/>
    <property type="match status" value="1"/>
</dbReference>
<dbReference type="NCBIfam" id="NF008728">
    <property type="entry name" value="PRK11742.1"/>
    <property type="match status" value="1"/>
</dbReference>
<dbReference type="PANTHER" id="PTHR11993:SF45">
    <property type="entry name" value="NADH-QUINONE OXIDOREDUCTASE SUBUNIT C_D"/>
    <property type="match status" value="1"/>
</dbReference>
<dbReference type="PANTHER" id="PTHR11993">
    <property type="entry name" value="NADH-UBIQUINONE OXIDOREDUCTASE 49 KDA SUBUNIT"/>
    <property type="match status" value="1"/>
</dbReference>
<dbReference type="Pfam" id="PF00329">
    <property type="entry name" value="Complex1_30kDa"/>
    <property type="match status" value="1"/>
</dbReference>
<dbReference type="Pfam" id="PF00346">
    <property type="entry name" value="Complex1_49kDa"/>
    <property type="match status" value="1"/>
</dbReference>
<dbReference type="SUPFAM" id="SSF56762">
    <property type="entry name" value="HydB/Nqo4-like"/>
    <property type="match status" value="1"/>
</dbReference>
<dbReference type="SUPFAM" id="SSF143243">
    <property type="entry name" value="Nqo5-like"/>
    <property type="match status" value="1"/>
</dbReference>
<dbReference type="PROSITE" id="PS00542">
    <property type="entry name" value="COMPLEX1_30K"/>
    <property type="match status" value="1"/>
</dbReference>
<dbReference type="PROSITE" id="PS00535">
    <property type="entry name" value="COMPLEX1_49K"/>
    <property type="match status" value="1"/>
</dbReference>
<gene>
    <name evidence="1" type="primary">nuoC</name>
    <name evidence="1" type="synonym">nuoCD</name>
    <name evidence="1" type="synonym">nuoD</name>
    <name type="ordered locus">ECED1_2750</name>
</gene>
<reference key="1">
    <citation type="journal article" date="2009" name="PLoS Genet.">
        <title>Organised genome dynamics in the Escherichia coli species results in highly diverse adaptive paths.</title>
        <authorList>
            <person name="Touchon M."/>
            <person name="Hoede C."/>
            <person name="Tenaillon O."/>
            <person name="Barbe V."/>
            <person name="Baeriswyl S."/>
            <person name="Bidet P."/>
            <person name="Bingen E."/>
            <person name="Bonacorsi S."/>
            <person name="Bouchier C."/>
            <person name="Bouvet O."/>
            <person name="Calteau A."/>
            <person name="Chiapello H."/>
            <person name="Clermont O."/>
            <person name="Cruveiller S."/>
            <person name="Danchin A."/>
            <person name="Diard M."/>
            <person name="Dossat C."/>
            <person name="Karoui M.E."/>
            <person name="Frapy E."/>
            <person name="Garry L."/>
            <person name="Ghigo J.M."/>
            <person name="Gilles A.M."/>
            <person name="Johnson J."/>
            <person name="Le Bouguenec C."/>
            <person name="Lescat M."/>
            <person name="Mangenot S."/>
            <person name="Martinez-Jehanne V."/>
            <person name="Matic I."/>
            <person name="Nassif X."/>
            <person name="Oztas S."/>
            <person name="Petit M.A."/>
            <person name="Pichon C."/>
            <person name="Rouy Z."/>
            <person name="Ruf C.S."/>
            <person name="Schneider D."/>
            <person name="Tourret J."/>
            <person name="Vacherie B."/>
            <person name="Vallenet D."/>
            <person name="Medigue C."/>
            <person name="Rocha E.P.C."/>
            <person name="Denamur E."/>
        </authorList>
    </citation>
    <scope>NUCLEOTIDE SEQUENCE [LARGE SCALE GENOMIC DNA]</scope>
    <source>
        <strain>ED1a</strain>
    </source>
</reference>
<keyword id="KW-0997">Cell inner membrane</keyword>
<keyword id="KW-1003">Cell membrane</keyword>
<keyword id="KW-0472">Membrane</keyword>
<keyword id="KW-0511">Multifunctional enzyme</keyword>
<keyword id="KW-0520">NAD</keyword>
<keyword id="KW-0874">Quinone</keyword>
<keyword id="KW-1278">Translocase</keyword>
<keyword id="KW-0813">Transport</keyword>
<keyword id="KW-0830">Ubiquinone</keyword>
<comment type="function">
    <text evidence="1">NDH-1 shuttles electrons from NADH, via FMN and iron-sulfur (Fe-S) centers, to quinones in the respiratory chain. The immediate electron acceptor for the enzyme in this species is believed to be ubiquinone. Couples the redox reaction to proton translocation (for every two electrons transferred, four hydrogen ions are translocated across the cytoplasmic membrane), and thus conserves the redox energy in a proton gradient.</text>
</comment>
<comment type="catalytic activity">
    <reaction evidence="1">
        <text>a quinone + NADH + 5 H(+)(in) = a quinol + NAD(+) + 4 H(+)(out)</text>
        <dbReference type="Rhea" id="RHEA:57888"/>
        <dbReference type="ChEBI" id="CHEBI:15378"/>
        <dbReference type="ChEBI" id="CHEBI:24646"/>
        <dbReference type="ChEBI" id="CHEBI:57540"/>
        <dbReference type="ChEBI" id="CHEBI:57945"/>
        <dbReference type="ChEBI" id="CHEBI:132124"/>
    </reaction>
</comment>
<comment type="subunit">
    <text evidence="1">NDH-1 is composed of 13 different subunits. Subunits NuoB, CD, E, F, and G constitute the peripheral sector of the complex.</text>
</comment>
<comment type="subcellular location">
    <subcellularLocation>
        <location evidence="1">Cell inner membrane</location>
        <topology evidence="1">Peripheral membrane protein</topology>
        <orientation evidence="1">Cytoplasmic side</orientation>
    </subcellularLocation>
</comment>
<comment type="similarity">
    <text evidence="1">In the N-terminal section; belongs to the complex I 30 kDa subunit family.</text>
</comment>
<comment type="similarity">
    <text evidence="1">In the C-terminal section; belongs to the complex I 49 kDa subunit family.</text>
</comment>
<proteinExistence type="inferred from homology"/>
<accession>B7MXG5</accession>
<name>NUOCD_ECO81</name>
<evidence type="ECO:0000255" key="1">
    <source>
        <dbReference type="HAMAP-Rule" id="MF_01359"/>
    </source>
</evidence>
<sequence length="600" mass="68711">MVNNMTDLTAQEPAWQTRDHLDDPVIGELRNRFGPDAFTVQATRTGVPVVWIKREQLLEVGDFLKKLPKPYVMLFDLHGMDERLRTHREGLPAADFSVFYHLISIDRNRDIMLKVALAENDLHVPTFTKLFPNANWYERETWDLFGITFDGHPNLRRIMMPQTWKGHPLRKDYPARATEFSPFELTKAKQDLEMEALTFKPEEWGMKRGTENEDFMFLNLGPNHPSAHGAFRIVLQLDGEEIVDCVPDIGYHHRGAEKMGERQSWHSYIPYTDRIEYLGGCVNEMPYVLAVEKLAGITVPDRVNVIRVMLSELFRINSHLLYISTFIQDVGAMTPVFFAFTDRQKIYDLVEAITGFRMHPAWFRIGGVAHDLPRGWDRLLREFLDWMPKRLASYEKAALQNTILKGRSQGVAAYGAKEALEWGTTGAGLRATGIDFDVRKARPYSGYENFDFEIPVGGGVSDCYTRVMLKVEELRQSLRILEQCLNNMPEGPFKADHPLTTPPPKERTLQHIETLITHFLQVSWGPVMPANESFQMVEATKGINSYYLTSDGSTMSYRTRIRTPSYAHLQQIPAAIRGSLVSDLIVYLGSIDFVMSDVDR</sequence>